<protein>
    <recommendedName>
        <fullName>Gas vesicle protein G1</fullName>
        <shortName>GvpG1</shortName>
    </recommendedName>
</protein>
<keyword id="KW-0304">Gas vesicle</keyword>
<keyword id="KW-0614">Plasmid</keyword>
<keyword id="KW-1185">Reference proteome</keyword>
<feature type="chain" id="PRO_0000182684" description="Gas vesicle protein G1">
    <location>
        <begin position="1"/>
        <end position="83"/>
    </location>
</feature>
<comment type="function">
    <text evidence="4 7 14 15">Proteins GvpF to GvpM might be involved in nucleating gas vesicle formation (Probable) (PubMed:15126480, PubMed:33281806). A minor component of the gas vesicle (PubMed:15126480). Gas vesicles are hollow, gas filled proteinaceous nanostructures found in several microbial planktonic microorganisms. They allow positioning of halobacteria at the optimal depth for growth in the poorly aerated, shallow brine pools of their habitat (PubMed:33711860).</text>
</comment>
<comment type="function">
    <text evidence="1 2 3 9 10">Expression of a 9.5 kb p-vac DNA fragment containing 2 divergently transcribed regions (gvpD-gvpE-gvpF-gvpG-gvpH-gvpI-gvpJ-gvpK-gvpL-gvpM and gvpA-gvpC-gvpN-gvpO) allows H.volcanii to produce gas vesicles (PubMed:10894744, PubMed:1404376, PubMed:7651141). A minimal gas vesicle can be made in H.volcanii by gvpA1-gvpO1 plus gvpF1-gvpG1-gvpJ1-gvpK1-gvpL1-gvpM1; lack of enough GvpJ1 prevents formation (PubMed:10894744). A similar region restores gas vesicle production in H.halobium without the p-vac locus, but it still has the c-vac locus (PubMed:1398080, PubMed:8002589).</text>
</comment>
<comment type="subunit">
    <text evidence="6 8 16">GvpF to GvpM interact with each other in vitro, and may form multi-subunit complex(es) (PubMed:33281806, PubMed:34975818). Might interact with GvpA1 (Probable).</text>
</comment>
<comment type="subcellular location">
    <subcellularLocation>
        <location evidence="4">Gas vesicle</location>
    </subcellularLocation>
</comment>
<comment type="induction">
    <text evidence="5 7 9">Part of a gvpF1-gvpG1-gvpH1-gvpI1-gvpJ1-gvpK1-gvpL1-gvpM1 operon, maximally expressed in early to mid log phase (PubMed:1956294, PubMed:7651141). Gas vesicles appear earlier when grown in static culture, possibly due to O(2)-limitation (PubMed:33711860).</text>
</comment>
<comment type="disruption phenotype">
    <text evidence="1 9 10">A single deletion produces very low levels of gas vesicles, in situ (PubMed:8002589). Deletion of gvpG1-gvpH1-gvpI1 prevents gas vesicle formation, cells still express gvpA1 (PubMed:7651141). A single deletion yields fragile gas vesicles, upon complementation the gas vesicles are cylindrical not spindle-shaped, in H.volcanii (PubMed:10894744).</text>
</comment>
<comment type="miscellaneous">
    <text evidence="3 5 7">Encoded in a 14-gene plasmid locus called p-vac which produces predominantly short, spindle-shaped gas vesicles during all stages of growth.</text>
</comment>
<comment type="similarity">
    <text evidence="13">Belongs to the gas vesicle GvpG family.</text>
</comment>
<proteinExistence type="evidence at protein level"/>
<sequence length="83" mass="10014">MFIIDDLFVSPFFSLLDILQTMALDEMYDTKSIRDDIKENQLLYEVGERSDEEYQQRKQALESQLEMAEQVQEQMRDRMEVKK</sequence>
<gene>
    <name type="primary">gvpG11</name>
    <name evidence="11" type="synonym">gvpG</name>
    <name evidence="12" type="synonym">p-gvpG</name>
    <name type="ordered locus">VNG_5026G</name>
</gene>
<gene>
    <name evidence="18" type="primary">gvpG1</name>
    <name evidence="18" type="ordered locus">VNG_6025G</name>
</gene>
<dbReference type="EMBL" id="M58557">
    <property type="protein sequence ID" value="AAA98192.1"/>
    <property type="molecule type" value="Genomic_DNA"/>
</dbReference>
<dbReference type="EMBL" id="X55648">
    <property type="protein sequence ID" value="CAA39174.1"/>
    <property type="molecule type" value="Genomic_DNA"/>
</dbReference>
<dbReference type="EMBL" id="AF016485">
    <property type="protein sequence ID" value="AAC82805.1"/>
    <property type="molecule type" value="Genomic_DNA"/>
</dbReference>
<dbReference type="EMBL" id="AE004438">
    <property type="protein sequence ID" value="AAG20722.1"/>
    <property type="molecule type" value="Genomic_DNA"/>
</dbReference>
<dbReference type="PIR" id="T08238">
    <property type="entry name" value="T08238"/>
</dbReference>
<dbReference type="RefSeq" id="WP_010890523.1">
    <property type="nucleotide sequence ID" value="NC_001869.1"/>
</dbReference>
<dbReference type="SMR" id="P24371"/>
<dbReference type="GeneID" id="5954622"/>
<dbReference type="KEGG" id="hal:gvpG"/>
<dbReference type="KEGG" id="hal:VNG_6025G"/>
<dbReference type="PATRIC" id="fig|64091.14.peg.2095"/>
<dbReference type="HOGENOM" id="CLU_185764_0_0_2"/>
<dbReference type="InParanoid" id="P24371"/>
<dbReference type="OrthoDB" id="214403at2157"/>
<dbReference type="Proteomes" id="UP000000554">
    <property type="component" value="Plasmid pNRC100"/>
</dbReference>
<dbReference type="Proteomes" id="UP000000554">
    <property type="component" value="Plasmid pNRC200"/>
</dbReference>
<dbReference type="GO" id="GO:0031411">
    <property type="term" value="C:gas vesicle"/>
    <property type="evidence" value="ECO:0007669"/>
    <property type="project" value="UniProtKB-SubCell"/>
</dbReference>
<dbReference type="InterPro" id="IPR054797">
    <property type="entry name" value="Gas_vesic_GvpG_halobact"/>
</dbReference>
<dbReference type="InterPro" id="IPR007804">
    <property type="entry name" value="GvpG"/>
</dbReference>
<dbReference type="NCBIfam" id="NF045779">
    <property type="entry name" value="gas_vesic_GvpG"/>
    <property type="match status" value="1"/>
</dbReference>
<dbReference type="Pfam" id="PF05120">
    <property type="entry name" value="GvpG"/>
    <property type="match status" value="1"/>
</dbReference>
<geneLocation type="plasmid">
    <name>pNRC100</name>
</geneLocation>
<geneLocation type="plasmid">
    <name>pNRC200</name>
</geneLocation>
<geneLocation type="plasmid">
    <name>pHH1</name>
</geneLocation>
<name>GVPG1_HALSA</name>
<accession>P24371</accession>
<accession>Q9HI22</accession>
<organism>
    <name type="scientific">Halobacterium salinarum (strain ATCC 700922 / JCM 11081 / NRC-1)</name>
    <name type="common">Halobacterium halobium</name>
    <dbReference type="NCBI Taxonomy" id="64091"/>
    <lineage>
        <taxon>Archaea</taxon>
        <taxon>Methanobacteriati</taxon>
        <taxon>Methanobacteriota</taxon>
        <taxon>Stenosarchaea group</taxon>
        <taxon>Halobacteria</taxon>
        <taxon>Halobacteriales</taxon>
        <taxon>Halobacteriaceae</taxon>
        <taxon>Halobacterium</taxon>
        <taxon>Halobacterium salinarum NRC-34001</taxon>
    </lineage>
</organism>
<reference evidence="17" key="1">
    <citation type="journal article" date="1991" name="Gene">
        <title>Structure and organization of the gas vesicle gene cluster on the Halobacterium halobium plasmid pNRC100.</title>
        <authorList>
            <person name="Jones J.G."/>
            <person name="Young D.C."/>
            <person name="Dassarma S."/>
        </authorList>
    </citation>
    <scope>NUCLEOTIDE SEQUENCE [GENOMIC DNA]</scope>
    <source>
        <strain>ATCC 700922 / JCM 11081 / NRC-1</strain>
        <plasmid>pNRC100</plasmid>
    </source>
</reference>
<reference evidence="19" key="2">
    <citation type="journal article" date="1991" name="Mol. Microbiol.">
        <title>A DNA region of 9 kbp contains all genes necessary for gas vesicle synthesis in halophilic archaebacteria.</title>
        <authorList>
            <person name="Horne M."/>
            <person name="Englert C."/>
            <person name="Wimmer C."/>
            <person name="Pfeifer F."/>
        </authorList>
    </citation>
    <scope>NUCLEOTIDE SEQUENCE [GENOMIC DNA]</scope>
    <scope>INDUCTION</scope>
    <source>
        <strain>NRC-817</strain>
        <plasmid>pHH1</plasmid>
    </source>
</reference>
<reference key="3">
    <citation type="journal article" date="1998" name="Genome Res.">
        <title>Snapshot of a large dynamic replicon in a halophilic archaeon: megaplasmid or minichromosome?</title>
        <authorList>
            <person name="Ng W.V."/>
            <person name="Ciufo S.A."/>
            <person name="Smith T.M."/>
            <person name="Bumgarner R.E."/>
            <person name="Baskin D."/>
            <person name="Faust J."/>
            <person name="Hall B."/>
            <person name="Loretz C."/>
            <person name="Seto J."/>
            <person name="Slagel J."/>
            <person name="Hood L."/>
            <person name="DasSarma S."/>
        </authorList>
    </citation>
    <scope>NUCLEOTIDE SEQUENCE [LARGE SCALE GENOMIC DNA]</scope>
    <source>
        <strain>ATCC 700922 / JCM 11081 / NRC-1</strain>
        <plasmid>pNRC100</plasmid>
    </source>
</reference>
<reference evidence="18" key="4">
    <citation type="journal article" date="2000" name="Proc. Natl. Acad. Sci. U.S.A.">
        <title>Genome sequence of Halobacterium species NRC-1.</title>
        <authorList>
            <person name="Ng W.V."/>
            <person name="Kennedy S.P."/>
            <person name="Mahairas G.G."/>
            <person name="Berquist B."/>
            <person name="Pan M."/>
            <person name="Shukla H.D."/>
            <person name="Lasky S.R."/>
            <person name="Baliga N.S."/>
            <person name="Thorsson V."/>
            <person name="Sbrogna J."/>
            <person name="Swartzell S."/>
            <person name="Weir D."/>
            <person name="Hall J."/>
            <person name="Dahl T.A."/>
            <person name="Welti R."/>
            <person name="Goo Y.A."/>
            <person name="Leithauser B."/>
            <person name="Keller K."/>
            <person name="Cruz R."/>
            <person name="Danson M.J."/>
            <person name="Hough D.W."/>
            <person name="Maddocks D.G."/>
            <person name="Jablonski P.E."/>
            <person name="Krebs M.P."/>
            <person name="Angevine C.M."/>
            <person name="Dale H."/>
            <person name="Isenbarger T.A."/>
            <person name="Peck R.F."/>
            <person name="Pohlschroder M."/>
            <person name="Spudich J.L."/>
            <person name="Jung K.-H."/>
            <person name="Alam M."/>
            <person name="Freitas T."/>
            <person name="Hou S."/>
            <person name="Daniels C.J."/>
            <person name="Dennis P.P."/>
            <person name="Omer A.D."/>
            <person name="Ebhardt H."/>
            <person name="Lowe T.M."/>
            <person name="Liang P."/>
            <person name="Riley M."/>
            <person name="Hood L."/>
            <person name="DasSarma S."/>
        </authorList>
    </citation>
    <scope>NUCLEOTIDE SEQUENCE [LARGE SCALE GENOMIC DNA]</scope>
    <source>
        <strain>ATCC 700922 / JCM 11081 / NRC-1</strain>
        <plasmid>pNRC200</plasmid>
    </source>
</reference>
<reference key="5">
    <citation type="journal article" date="1992" name="Gene">
        <title>Genetic transformation of a halophilic archaebacterium with a gas vesicle gene cluster restores its ability to float.</title>
        <authorList>
            <person name="Halladay J.T."/>
            <person name="Ng W.L."/>
            <person name="DasSarma S."/>
        </authorList>
    </citation>
    <scope>FUNCTION</scope>
    <scope>GAS VESICLE PRODUCTION</scope>
    <source>
        <strain>ATCC 700922 / JCM 11081 / NRC-1</strain>
        <plasmid>pNRC100</plasmid>
    </source>
</reference>
<reference key="6">
    <citation type="journal article" date="1992" name="J. Mol. Biol.">
        <title>Three different but related gene clusters encoding gas vesicles in halophilic archaea.</title>
        <authorList>
            <person name="Englert C."/>
            <person name="Krueger K."/>
            <person name="Offner S."/>
            <person name="Pfeifer F."/>
        </authorList>
    </citation>
    <scope>GAS VESICLE GENE CLUSTER</scope>
    <source>
        <strain>NRC-817</strain>
        <plasmid>pHH1</plasmid>
    </source>
</reference>
<reference key="7">
    <citation type="journal article" date="1994" name="J. Bacteriol.">
        <title>Wild-type gas vesicle formation requires at least ten genes in the gvp gene cluster of Halobacterium halobium plasmid pNRC100.</title>
        <authorList>
            <person name="DasSarma S."/>
            <person name="Arora P."/>
            <person name="Lin F."/>
            <person name="Molinari E."/>
            <person name="Yin L.R."/>
        </authorList>
    </citation>
    <scope>DISRUPTION PHENOTYPE</scope>
    <source>
        <strain>ATCC 700922 / JCM 11081 / NRC-1</strain>
        <plasmid>pNRC100</plasmid>
    </source>
</reference>
<reference key="8">
    <citation type="journal article" date="1995" name="Mol. Microbiol.">
        <title>Complementation studies with the gas vesicle-encoding p-vac region of Halobacterium salinarium PHH1 reveal a regulatory role for the p-gvpDE genes.</title>
        <authorList>
            <person name="Offner S."/>
            <person name="Pfeifer F."/>
        </authorList>
    </citation>
    <scope>FUNCTION</scope>
    <scope>INDUCTION</scope>
    <scope>DISRUPTION PHENOTYPE</scope>
    <source>
        <strain>PHH1</strain>
    </source>
</reference>
<reference key="9">
    <citation type="journal article" date="1997" name="Microbiology">
        <title>Growth competition between Halobacterium salinarium strain PHH1 and mutants affected in gas vesicle synthesis.</title>
        <authorList>
            <person name="Beard S.J."/>
            <person name="Hayes P.K."/>
            <person name="Walsby A.E."/>
        </authorList>
    </citation>
    <scope>FUNCTION IN BUOYANCY</scope>
    <scope>POSSIBLE INDUCTION BY OXYGEN LIMITATION</scope>
    <source>
        <strain>PHH1</strain>
    </source>
</reference>
<reference key="10">
    <citation type="journal article" date="2000" name="J. Bacteriol.">
        <title>Eight of fourteen gvp genes are sufficient for formation of gas vesicles in halophilic archaea.</title>
        <authorList>
            <person name="Offner S."/>
            <person name="Hofacker A."/>
            <person name="Wanner G."/>
            <person name="Pfeifer F."/>
        </authorList>
    </citation>
    <scope>DISRUPTION PHENOTYPE</scope>
    <source>
        <strain>PHH1</strain>
        <plasmid>pHH1</plasmid>
    </source>
</reference>
<reference key="11">
    <citation type="journal article" date="2004" name="J. Bacteriol.">
        <title>Complexity of gas vesicle biogenesis in Halobacterium sp. strain NRC-1: identification of five new proteins.</title>
        <authorList>
            <person name="Shukla H.D."/>
            <person name="DasSarma S."/>
        </authorList>
    </citation>
    <scope>POSSIBLE FUNCTION</scope>
    <scope>SUBCELLULAR LOCATION</scope>
    <source>
        <strain>ATCC 700922 / JCM 11081 / NRC-1</strain>
        <plasmid>pNRC100</plasmid>
    </source>
</reference>
<reference key="12">
    <citation type="journal article" date="2020" name="Front. Microbiol.">
        <title>Accessory Gvp Proteins Form a Complex During Gas Vesicle Formation of Haloarchaea.</title>
        <authorList>
            <person name="Voelkner K."/>
            <person name="Jost A."/>
            <person name="Pfeifer F."/>
        </authorList>
    </citation>
    <scope>FUNCTION</scope>
    <scope>SUBUNIT</scope>
    <source>
        <strain>PHH1</strain>
        <plasmid>pHH1</plasmid>
    </source>
</reference>
<reference key="13">
    <citation type="journal article" date="2021" name="Front. Microbiol.">
        <title>Effect of Mutations in GvpJ and GvpM on Gas Vesicle Formation of Halobacterium salinarum.</title>
        <authorList>
            <person name="Jost A."/>
            <person name="Knitsch R."/>
            <person name="Voelkner K."/>
            <person name="Pfeifer F."/>
        </authorList>
    </citation>
    <scope>INTERACTION WITH GVPJ1 AND GVPL1</scope>
    <source>
        <strain>PHH1</strain>
        <plasmid>pHH1</plasmid>
    </source>
</reference>
<reference key="14">
    <citation type="journal article" date="2022" name="Front. Microbiol.">
        <title>Interaction of the gas vesicle proteins GvpA, GvpC, GvpN, and GvpO of Halobacterium salinarum.</title>
        <authorList>
            <person name="Jost A."/>
            <person name="Pfeifer F."/>
        </authorList>
    </citation>
    <scope>SUBUNIT</scope>
    <source>
        <strain>PHH1</strain>
        <plasmid>pHH1</plasmid>
    </source>
</reference>
<evidence type="ECO:0000269" key="1">
    <source>
    </source>
</evidence>
<evidence type="ECO:0000269" key="2">
    <source>
    </source>
</evidence>
<evidence type="ECO:0000269" key="3">
    <source>
    </source>
</evidence>
<evidence type="ECO:0000269" key="4">
    <source>
    </source>
</evidence>
<evidence type="ECO:0000269" key="5">
    <source>
    </source>
</evidence>
<evidence type="ECO:0000269" key="6">
    <source>
    </source>
</evidence>
<evidence type="ECO:0000269" key="7">
    <source>
    </source>
</evidence>
<evidence type="ECO:0000269" key="8">
    <source>
    </source>
</evidence>
<evidence type="ECO:0000269" key="9">
    <source>
    </source>
</evidence>
<evidence type="ECO:0000269" key="10">
    <source>
    </source>
</evidence>
<evidence type="ECO:0000303" key="11">
    <source>
    </source>
</evidence>
<evidence type="ECO:0000303" key="12">
    <source>
    </source>
</evidence>
<evidence type="ECO:0000305" key="13"/>
<evidence type="ECO:0000305" key="14">
    <source>
    </source>
</evidence>
<evidence type="ECO:0000305" key="15">
    <source>
    </source>
</evidence>
<evidence type="ECO:0000305" key="16">
    <source>
    </source>
</evidence>
<evidence type="ECO:0000312" key="17">
    <source>
        <dbReference type="EMBL" id="AAA98192.1"/>
    </source>
</evidence>
<evidence type="ECO:0000312" key="18">
    <source>
        <dbReference type="EMBL" id="AAG20722.1"/>
    </source>
</evidence>
<evidence type="ECO:0000312" key="19">
    <source>
        <dbReference type="EMBL" id="CAA39174.1"/>
    </source>
</evidence>